<comment type="function">
    <text evidence="1">The glycine cleavage system catalyzes the degradation of glycine. The H protein shuttles the methylamine group of glycine from the P protein to the T protein.</text>
</comment>
<comment type="cofactor">
    <cofactor evidence="1">
        <name>(R)-lipoate</name>
        <dbReference type="ChEBI" id="CHEBI:83088"/>
    </cofactor>
    <text evidence="1">Binds 1 lipoyl cofactor covalently.</text>
</comment>
<comment type="subunit">
    <text evidence="1">The glycine cleavage system is composed of four proteins: P, T, L and H.</text>
</comment>
<comment type="similarity">
    <text evidence="1">Belongs to the GcvH family.</text>
</comment>
<gene>
    <name evidence="1" type="primary">gcvH</name>
    <name type="ordered locus">DR_1811</name>
</gene>
<name>GCSH_DEIRA</name>
<dbReference type="EMBL" id="AE000513">
    <property type="protein sequence ID" value="AAF11361.1"/>
    <property type="molecule type" value="Genomic_DNA"/>
</dbReference>
<dbReference type="PIR" id="G75352">
    <property type="entry name" value="G75352"/>
</dbReference>
<dbReference type="RefSeq" id="NP_295534.1">
    <property type="nucleotide sequence ID" value="NC_001263.1"/>
</dbReference>
<dbReference type="RefSeq" id="WP_010888446.1">
    <property type="nucleotide sequence ID" value="NC_001263.1"/>
</dbReference>
<dbReference type="SMR" id="Q9RTF3"/>
<dbReference type="FunCoup" id="Q9RTF3">
    <property type="interactions" value="422"/>
</dbReference>
<dbReference type="STRING" id="243230.DR_1811"/>
<dbReference type="PaxDb" id="243230-DR_1811"/>
<dbReference type="EnsemblBacteria" id="AAF11361">
    <property type="protein sequence ID" value="AAF11361"/>
    <property type="gene ID" value="DR_1811"/>
</dbReference>
<dbReference type="GeneID" id="69518051"/>
<dbReference type="KEGG" id="dra:DR_1811"/>
<dbReference type="PATRIC" id="fig|243230.17.peg.2022"/>
<dbReference type="eggNOG" id="COG0509">
    <property type="taxonomic scope" value="Bacteria"/>
</dbReference>
<dbReference type="HOGENOM" id="CLU_097408_2_0_0"/>
<dbReference type="InParanoid" id="Q9RTF3"/>
<dbReference type="OrthoDB" id="9796712at2"/>
<dbReference type="Proteomes" id="UP000002524">
    <property type="component" value="Chromosome 1"/>
</dbReference>
<dbReference type="GO" id="GO:0005829">
    <property type="term" value="C:cytosol"/>
    <property type="evidence" value="ECO:0000318"/>
    <property type="project" value="GO_Central"/>
</dbReference>
<dbReference type="GO" id="GO:0005960">
    <property type="term" value="C:glycine cleavage complex"/>
    <property type="evidence" value="ECO:0007669"/>
    <property type="project" value="InterPro"/>
</dbReference>
<dbReference type="GO" id="GO:0019464">
    <property type="term" value="P:glycine decarboxylation via glycine cleavage system"/>
    <property type="evidence" value="ECO:0007669"/>
    <property type="project" value="UniProtKB-UniRule"/>
</dbReference>
<dbReference type="CDD" id="cd06848">
    <property type="entry name" value="GCS_H"/>
    <property type="match status" value="1"/>
</dbReference>
<dbReference type="Gene3D" id="2.40.50.100">
    <property type="match status" value="1"/>
</dbReference>
<dbReference type="HAMAP" id="MF_00272">
    <property type="entry name" value="GcvH"/>
    <property type="match status" value="1"/>
</dbReference>
<dbReference type="InterPro" id="IPR003016">
    <property type="entry name" value="2-oxoA_DH_lipoyl-BS"/>
</dbReference>
<dbReference type="InterPro" id="IPR000089">
    <property type="entry name" value="Biotin_lipoyl"/>
</dbReference>
<dbReference type="InterPro" id="IPR002930">
    <property type="entry name" value="GCV_H"/>
</dbReference>
<dbReference type="InterPro" id="IPR033753">
    <property type="entry name" value="GCV_H/Fam206"/>
</dbReference>
<dbReference type="InterPro" id="IPR017453">
    <property type="entry name" value="GCV_H_sub"/>
</dbReference>
<dbReference type="InterPro" id="IPR011053">
    <property type="entry name" value="Single_hybrid_motif"/>
</dbReference>
<dbReference type="NCBIfam" id="TIGR00527">
    <property type="entry name" value="gcvH"/>
    <property type="match status" value="1"/>
</dbReference>
<dbReference type="NCBIfam" id="NF002270">
    <property type="entry name" value="PRK01202.1"/>
    <property type="match status" value="1"/>
</dbReference>
<dbReference type="PANTHER" id="PTHR11715">
    <property type="entry name" value="GLYCINE CLEAVAGE SYSTEM H PROTEIN"/>
    <property type="match status" value="1"/>
</dbReference>
<dbReference type="PANTHER" id="PTHR11715:SF3">
    <property type="entry name" value="GLYCINE CLEAVAGE SYSTEM H PROTEIN-RELATED"/>
    <property type="match status" value="1"/>
</dbReference>
<dbReference type="Pfam" id="PF01597">
    <property type="entry name" value="GCV_H"/>
    <property type="match status" value="1"/>
</dbReference>
<dbReference type="SUPFAM" id="SSF51230">
    <property type="entry name" value="Single hybrid motif"/>
    <property type="match status" value="1"/>
</dbReference>
<dbReference type="PROSITE" id="PS50968">
    <property type="entry name" value="BIOTINYL_LIPOYL"/>
    <property type="match status" value="1"/>
</dbReference>
<dbReference type="PROSITE" id="PS00189">
    <property type="entry name" value="LIPOYL"/>
    <property type="match status" value="1"/>
</dbReference>
<evidence type="ECO:0000255" key="1">
    <source>
        <dbReference type="HAMAP-Rule" id="MF_00272"/>
    </source>
</evidence>
<evidence type="ECO:0000255" key="2">
    <source>
        <dbReference type="PROSITE-ProRule" id="PRU01066"/>
    </source>
</evidence>
<feature type="chain" id="PRO_0000166217" description="Glycine cleavage system H protein">
    <location>
        <begin position="1"/>
        <end position="120"/>
    </location>
</feature>
<feature type="domain" description="Lipoyl-binding" evidence="2">
    <location>
        <begin position="20"/>
        <end position="102"/>
    </location>
</feature>
<feature type="modified residue" description="N6-lipoyllysine" evidence="1">
    <location>
        <position position="61"/>
    </location>
</feature>
<sequence>MTTTPTDRKYAASHEWLTQDGTVGISDHAQEQLGDVVYVELPEVGREVKAGEAVAVVESVKTASDIYAPASGTITAVNDELSGSPEKVNESPYEGGWLFKLDVTEEGDLLDAAAYEAQAN</sequence>
<protein>
    <recommendedName>
        <fullName evidence="1">Glycine cleavage system H protein</fullName>
    </recommendedName>
</protein>
<accession>Q9RTF3</accession>
<keyword id="KW-0450">Lipoyl</keyword>
<keyword id="KW-1185">Reference proteome</keyword>
<reference key="1">
    <citation type="journal article" date="1999" name="Science">
        <title>Genome sequence of the radioresistant bacterium Deinococcus radiodurans R1.</title>
        <authorList>
            <person name="White O."/>
            <person name="Eisen J.A."/>
            <person name="Heidelberg J.F."/>
            <person name="Hickey E.K."/>
            <person name="Peterson J.D."/>
            <person name="Dodson R.J."/>
            <person name="Haft D.H."/>
            <person name="Gwinn M.L."/>
            <person name="Nelson W.C."/>
            <person name="Richardson D.L."/>
            <person name="Moffat K.S."/>
            <person name="Qin H."/>
            <person name="Jiang L."/>
            <person name="Pamphile W."/>
            <person name="Crosby M."/>
            <person name="Shen M."/>
            <person name="Vamathevan J.J."/>
            <person name="Lam P."/>
            <person name="McDonald L.A."/>
            <person name="Utterback T.R."/>
            <person name="Zalewski C."/>
            <person name="Makarova K.S."/>
            <person name="Aravind L."/>
            <person name="Daly M.J."/>
            <person name="Minton K.W."/>
            <person name="Fleischmann R.D."/>
            <person name="Ketchum K.A."/>
            <person name="Nelson K.E."/>
            <person name="Salzberg S.L."/>
            <person name="Smith H.O."/>
            <person name="Venter J.C."/>
            <person name="Fraser C.M."/>
        </authorList>
    </citation>
    <scope>NUCLEOTIDE SEQUENCE [LARGE SCALE GENOMIC DNA]</scope>
    <source>
        <strain>ATCC 13939 / DSM 20539 / JCM 16871 / CCUG 27074 / LMG 4051 / NBRC 15346 / NCIMB 9279 / VKM B-1422 / R1</strain>
    </source>
</reference>
<proteinExistence type="inferred from homology"/>
<organism>
    <name type="scientific">Deinococcus radiodurans (strain ATCC 13939 / DSM 20539 / JCM 16871 / CCUG 27074 / LMG 4051 / NBRC 15346 / NCIMB 9279 / VKM B-1422 / R1)</name>
    <dbReference type="NCBI Taxonomy" id="243230"/>
    <lineage>
        <taxon>Bacteria</taxon>
        <taxon>Thermotogati</taxon>
        <taxon>Deinococcota</taxon>
        <taxon>Deinococci</taxon>
        <taxon>Deinococcales</taxon>
        <taxon>Deinococcaceae</taxon>
        <taxon>Deinococcus</taxon>
    </lineage>
</organism>